<reference evidence="7" key="1">
    <citation type="journal article" date="2002" name="Biochem. J.">
        <title>Functional identity of Drosophila melanogaster Indy as a cation-independent, electroneutral transporter for tricarboxylic acid-cycle intermediates.</title>
        <authorList>
            <person name="Inoue K."/>
            <person name="Fei Y.-J."/>
            <person name="Huang W."/>
            <person name="Zhuang L."/>
            <person name="Chen Z."/>
            <person name="Ganapathy V."/>
        </authorList>
    </citation>
    <scope>NUCLEOTIDE SEQUENCE [MRNA] (ISOFORM A)</scope>
    <scope>FUNCTION</scope>
</reference>
<reference evidence="7" key="2">
    <citation type="journal article" date="2000" name="Science">
        <title>The genome sequence of Drosophila melanogaster.</title>
        <authorList>
            <person name="Adams M.D."/>
            <person name="Celniker S.E."/>
            <person name="Holt R.A."/>
            <person name="Evans C.A."/>
            <person name="Gocayne J.D."/>
            <person name="Amanatides P.G."/>
            <person name="Scherer S.E."/>
            <person name="Li P.W."/>
            <person name="Hoskins R.A."/>
            <person name="Galle R.F."/>
            <person name="George R.A."/>
            <person name="Lewis S.E."/>
            <person name="Richards S."/>
            <person name="Ashburner M."/>
            <person name="Henderson S.N."/>
            <person name="Sutton G.G."/>
            <person name="Wortman J.R."/>
            <person name="Yandell M.D."/>
            <person name="Zhang Q."/>
            <person name="Chen L.X."/>
            <person name="Brandon R.C."/>
            <person name="Rogers Y.-H.C."/>
            <person name="Blazej R.G."/>
            <person name="Champe M."/>
            <person name="Pfeiffer B.D."/>
            <person name="Wan K.H."/>
            <person name="Doyle C."/>
            <person name="Baxter E.G."/>
            <person name="Helt G."/>
            <person name="Nelson C.R."/>
            <person name="Miklos G.L.G."/>
            <person name="Abril J.F."/>
            <person name="Agbayani A."/>
            <person name="An H.-J."/>
            <person name="Andrews-Pfannkoch C."/>
            <person name="Baldwin D."/>
            <person name="Ballew R.M."/>
            <person name="Basu A."/>
            <person name="Baxendale J."/>
            <person name="Bayraktaroglu L."/>
            <person name="Beasley E.M."/>
            <person name="Beeson K.Y."/>
            <person name="Benos P.V."/>
            <person name="Berman B.P."/>
            <person name="Bhandari D."/>
            <person name="Bolshakov S."/>
            <person name="Borkova D."/>
            <person name="Botchan M.R."/>
            <person name="Bouck J."/>
            <person name="Brokstein P."/>
            <person name="Brottier P."/>
            <person name="Burtis K.C."/>
            <person name="Busam D.A."/>
            <person name="Butler H."/>
            <person name="Cadieu E."/>
            <person name="Center A."/>
            <person name="Chandra I."/>
            <person name="Cherry J.M."/>
            <person name="Cawley S."/>
            <person name="Dahlke C."/>
            <person name="Davenport L.B."/>
            <person name="Davies P."/>
            <person name="de Pablos B."/>
            <person name="Delcher A."/>
            <person name="Deng Z."/>
            <person name="Mays A.D."/>
            <person name="Dew I."/>
            <person name="Dietz S.M."/>
            <person name="Dodson K."/>
            <person name="Doup L.E."/>
            <person name="Downes M."/>
            <person name="Dugan-Rocha S."/>
            <person name="Dunkov B.C."/>
            <person name="Dunn P."/>
            <person name="Durbin K.J."/>
            <person name="Evangelista C.C."/>
            <person name="Ferraz C."/>
            <person name="Ferriera S."/>
            <person name="Fleischmann W."/>
            <person name="Fosler C."/>
            <person name="Gabrielian A.E."/>
            <person name="Garg N.S."/>
            <person name="Gelbart W.M."/>
            <person name="Glasser K."/>
            <person name="Glodek A."/>
            <person name="Gong F."/>
            <person name="Gorrell J.H."/>
            <person name="Gu Z."/>
            <person name="Guan P."/>
            <person name="Harris M."/>
            <person name="Harris N.L."/>
            <person name="Harvey D.A."/>
            <person name="Heiman T.J."/>
            <person name="Hernandez J.R."/>
            <person name="Houck J."/>
            <person name="Hostin D."/>
            <person name="Houston K.A."/>
            <person name="Howland T.J."/>
            <person name="Wei M.-H."/>
            <person name="Ibegwam C."/>
            <person name="Jalali M."/>
            <person name="Kalush F."/>
            <person name="Karpen G.H."/>
            <person name="Ke Z."/>
            <person name="Kennison J.A."/>
            <person name="Ketchum K.A."/>
            <person name="Kimmel B.E."/>
            <person name="Kodira C.D."/>
            <person name="Kraft C.L."/>
            <person name="Kravitz S."/>
            <person name="Kulp D."/>
            <person name="Lai Z."/>
            <person name="Lasko P."/>
            <person name="Lei Y."/>
            <person name="Levitsky A.A."/>
            <person name="Li J.H."/>
            <person name="Li Z."/>
            <person name="Liang Y."/>
            <person name="Lin X."/>
            <person name="Liu X."/>
            <person name="Mattei B."/>
            <person name="McIntosh T.C."/>
            <person name="McLeod M.P."/>
            <person name="McPherson D."/>
            <person name="Merkulov G."/>
            <person name="Milshina N.V."/>
            <person name="Mobarry C."/>
            <person name="Morris J."/>
            <person name="Moshrefi A."/>
            <person name="Mount S.M."/>
            <person name="Moy M."/>
            <person name="Murphy B."/>
            <person name="Murphy L."/>
            <person name="Muzny D.M."/>
            <person name="Nelson D.L."/>
            <person name="Nelson D.R."/>
            <person name="Nelson K.A."/>
            <person name="Nixon K."/>
            <person name="Nusskern D.R."/>
            <person name="Pacleb J.M."/>
            <person name="Palazzolo M."/>
            <person name="Pittman G.S."/>
            <person name="Pan S."/>
            <person name="Pollard J."/>
            <person name="Puri V."/>
            <person name="Reese M.G."/>
            <person name="Reinert K."/>
            <person name="Remington K."/>
            <person name="Saunders R.D.C."/>
            <person name="Scheeler F."/>
            <person name="Shen H."/>
            <person name="Shue B.C."/>
            <person name="Siden-Kiamos I."/>
            <person name="Simpson M."/>
            <person name="Skupski M.P."/>
            <person name="Smith T.J."/>
            <person name="Spier E."/>
            <person name="Spradling A.C."/>
            <person name="Stapleton M."/>
            <person name="Strong R."/>
            <person name="Sun E."/>
            <person name="Svirskas R."/>
            <person name="Tector C."/>
            <person name="Turner R."/>
            <person name="Venter E."/>
            <person name="Wang A.H."/>
            <person name="Wang X."/>
            <person name="Wang Z.-Y."/>
            <person name="Wassarman D.A."/>
            <person name="Weinstock G.M."/>
            <person name="Weissenbach J."/>
            <person name="Williams S.M."/>
            <person name="Woodage T."/>
            <person name="Worley K.C."/>
            <person name="Wu D."/>
            <person name="Yang S."/>
            <person name="Yao Q.A."/>
            <person name="Ye J."/>
            <person name="Yeh R.-F."/>
            <person name="Zaveri J.S."/>
            <person name="Zhan M."/>
            <person name="Zhang G."/>
            <person name="Zhao Q."/>
            <person name="Zheng L."/>
            <person name="Zheng X.H."/>
            <person name="Zhong F.N."/>
            <person name="Zhong W."/>
            <person name="Zhou X."/>
            <person name="Zhu S.C."/>
            <person name="Zhu X."/>
            <person name="Smith H.O."/>
            <person name="Gibbs R.A."/>
            <person name="Myers E.W."/>
            <person name="Rubin G.M."/>
            <person name="Venter J.C."/>
        </authorList>
    </citation>
    <scope>NUCLEOTIDE SEQUENCE [LARGE SCALE GENOMIC DNA]</scope>
    <source>
        <strain evidence="2">Berkeley</strain>
    </source>
</reference>
<reference key="3">
    <citation type="journal article" date="2002" name="Genome Biol.">
        <title>Annotation of the Drosophila melanogaster euchromatic genome: a systematic review.</title>
        <authorList>
            <person name="Misra S."/>
            <person name="Crosby M.A."/>
            <person name="Mungall C.J."/>
            <person name="Matthews B.B."/>
            <person name="Campbell K.S."/>
            <person name="Hradecky P."/>
            <person name="Huang Y."/>
            <person name="Kaminker J.S."/>
            <person name="Millburn G.H."/>
            <person name="Prochnik S.E."/>
            <person name="Smith C.D."/>
            <person name="Tupy J.L."/>
            <person name="Whitfield E.J."/>
            <person name="Bayraktaroglu L."/>
            <person name="Berman B.P."/>
            <person name="Bettencourt B.R."/>
            <person name="Celniker S.E."/>
            <person name="de Grey A.D.N.J."/>
            <person name="Drysdale R.A."/>
            <person name="Harris N.L."/>
            <person name="Richter J."/>
            <person name="Russo S."/>
            <person name="Schroeder A.J."/>
            <person name="Shu S.Q."/>
            <person name="Stapleton M."/>
            <person name="Yamada C."/>
            <person name="Ashburner M."/>
            <person name="Gelbart W.M."/>
            <person name="Rubin G.M."/>
            <person name="Lewis S.E."/>
        </authorList>
    </citation>
    <scope>GENOME REANNOTATION</scope>
    <scope>ALTERNATIVE SPLICING</scope>
    <source>
        <strain>Berkeley</strain>
    </source>
</reference>
<reference evidence="7" key="4">
    <citation type="journal article" date="2002" name="Genome Biol.">
        <title>A Drosophila full-length cDNA resource.</title>
        <authorList>
            <person name="Stapleton M."/>
            <person name="Carlson J.W."/>
            <person name="Brokstein P."/>
            <person name="Yu C."/>
            <person name="Champe M."/>
            <person name="George R.A."/>
            <person name="Guarin H."/>
            <person name="Kronmiller B."/>
            <person name="Pacleb J.M."/>
            <person name="Park S."/>
            <person name="Wan K.H."/>
            <person name="Rubin G.M."/>
            <person name="Celniker S.E."/>
        </authorList>
    </citation>
    <scope>NUCLEOTIDE SEQUENCE [LARGE SCALE MRNA] (ISOFORM A)</scope>
    <source>
        <strain evidence="6">Berkeley</strain>
        <tissue evidence="6">Embryo</tissue>
    </source>
</reference>
<reference evidence="7" key="5">
    <citation type="journal article" date="1999" name="Genetics">
        <title>Large number of replacement polymorphisms in rapidly evolving genes of Drosophila. Implications for genome-wide surveys of DNA polymorphism.</title>
        <authorList>
            <person name="Schmid K.J."/>
            <person name="Nigro L."/>
            <person name="Aquadro C.F."/>
            <person name="Tautz D."/>
        </authorList>
    </citation>
    <scope>NUCLEOTIDE SEQUENCE [MRNA] OF 366-572</scope>
    <source>
        <strain evidence="8">Canton-S</strain>
        <tissue>Embryo</tissue>
    </source>
</reference>
<reference evidence="7" key="6">
    <citation type="journal article" date="2000" name="Science">
        <title>Extended life-span conferred by cotransporter gene mutations in Drosophila.</title>
        <authorList>
            <person name="Rogina B."/>
            <person name="Reenan R.A."/>
            <person name="Nilsen S.P."/>
            <person name="Helfand S.L."/>
        </authorList>
    </citation>
    <scope>IDENTIFICATION</scope>
    <scope>FUNCTION</scope>
    <scope>TISSUE SPECIFICITY</scope>
</reference>
<reference evidence="7" key="7">
    <citation type="journal article" date="2002" name="Proc. Natl. Acad. Sci. U.S.A.">
        <title>Functional characterization and immunolocalization of the transporter encoded by the life-extending gene Indy.</title>
        <authorList>
            <person name="Knauf F."/>
            <person name="Rogina B."/>
            <person name="Jiang Z."/>
            <person name="Aronson P.S."/>
            <person name="Helfand S.L."/>
        </authorList>
    </citation>
    <scope>FUNCTION</scope>
    <scope>SUBCELLULAR LOCATION</scope>
    <scope>INDUCTION</scope>
    <scope>TISSUE SPECIFICITY</scope>
</reference>
<feature type="chain" id="PRO_0000172499" description="Protein I'm not dead yet">
    <location>
        <begin position="1"/>
        <end position="590"/>
    </location>
</feature>
<feature type="transmembrane region" description="Helical" evidence="1">
    <location>
        <begin position="43"/>
        <end position="63"/>
    </location>
</feature>
<feature type="transmembrane region" description="Helical" evidence="1">
    <location>
        <begin position="82"/>
        <end position="102"/>
    </location>
</feature>
<feature type="transmembrane region" description="Helical" evidence="1">
    <location>
        <begin position="115"/>
        <end position="135"/>
    </location>
</feature>
<feature type="transmembrane region" description="Helical" evidence="1">
    <location>
        <begin position="153"/>
        <end position="173"/>
    </location>
</feature>
<feature type="transmembrane region" description="Helical" evidence="1">
    <location>
        <begin position="224"/>
        <end position="244"/>
    </location>
</feature>
<feature type="transmembrane region" description="Helical" evidence="1">
    <location>
        <begin position="270"/>
        <end position="290"/>
    </location>
</feature>
<feature type="transmembrane region" description="Helical" evidence="1">
    <location>
        <begin position="329"/>
        <end position="349"/>
    </location>
</feature>
<feature type="transmembrane region" description="Helical" evidence="1">
    <location>
        <begin position="373"/>
        <end position="393"/>
    </location>
</feature>
<feature type="transmembrane region" description="Helical" evidence="1">
    <location>
        <begin position="457"/>
        <end position="477"/>
    </location>
</feature>
<feature type="transmembrane region" description="Helical" evidence="1">
    <location>
        <begin position="509"/>
        <end position="529"/>
    </location>
</feature>
<feature type="transmembrane region" description="Helical" evidence="1">
    <location>
        <begin position="540"/>
        <end position="560"/>
    </location>
</feature>
<feature type="splice variant" id="VSP_029170" description="In isoform B." evidence="7">
    <location>
        <begin position="1"/>
        <end position="18"/>
    </location>
</feature>
<keyword id="KW-0002">3D-structure</keyword>
<keyword id="KW-0025">Alternative splicing</keyword>
<keyword id="KW-1003">Cell membrane</keyword>
<keyword id="KW-0472">Membrane</keyword>
<keyword id="KW-1185">Reference proteome</keyword>
<keyword id="KW-0812">Transmembrane</keyword>
<keyword id="KW-1133">Transmembrane helix</keyword>
<keyword id="KW-0813">Transport</keyword>
<comment type="function">
    <text evidence="3 4 5">Cation-independent electroneutral transporter (not associated with membrane depolarization) of a variety of tricarboxylic and dicarboxylic acid-cycle intermediates. There is also small, but detectable, transport of monocarboxylics. Transport is through the epithelium of the gut and across the plasma membranes of organs involved in intermediary metabolism and storage. Affinity for substrates is citrate &gt; succinate &gt; pyruvate. Fumarate, a-ketoglutarate, and glutarate are also transported, but not lactate. Transport mechanism that is not coupled to Na(+), K(+), or Cl(-). Function is shown in Xenopus oocytes and human retinal pigment epithelial (HRPE) cell lines.</text>
</comment>
<comment type="subcellular location">
    <subcellularLocation>
        <location evidence="5">Basolateral cell membrane</location>
        <topology evidence="5">Multi-pass membrane protein</topology>
    </subcellularLocation>
    <text>Basolateral membrane of cells in the midgut.</text>
</comment>
<comment type="alternative products">
    <event type="alternative splicing"/>
    <isoform>
        <id>Q9VVT2-1</id>
        <name>A</name>
        <name>C</name>
        <sequence type="displayed"/>
    </isoform>
    <isoform>
        <id>Q9VVT2-2</id>
        <name>B</name>
        <sequence type="described" ref="VSP_029170"/>
    </isoform>
</comment>
<comment type="tissue specificity">
    <text evidence="3 5">In adults, abundantly expressed in the fat body, basolateral region of midgut cells and oenocytes. Low level expression is seen in the halteres, procardia, restricted regions of the esophagus and hindgut, base of the legs and in a subset of cells in the third segment of the antennae.</text>
</comment>
<comment type="induction">
    <text evidence="5">Completely inhibited by DIDS. Modest but significant inhibition by phloretin or furosemide.</text>
</comment>
<comment type="miscellaneous">
    <text evidence="3 5">The life-extending effect of mutations is likely caused by an alteration in energy balance caused by a decrease in transport function.</text>
</comment>
<comment type="similarity">
    <text evidence="7">Belongs to the SLC13A/DASS transporter (TC 2.A.47) family. NADC subfamily.</text>
</comment>
<comment type="sequence caution" evidence="7">
    <conflict type="erroneous initiation">
        <sequence resource="EMBL-CDS" id="AAF73384"/>
    </conflict>
</comment>
<sequence length="590" mass="65585">MATETTKMIYTPPPLDIKMEIEIGEQPQPPVKCSNFFANHWKGLVVFLVPLLCLPVMLLNEGAEFRCMYLLLVMAIFWVTEALPLYVTSMIPIVAFPIMGIMSSDQTCRLYFKDTLVMFMGGIMVALAVEYCNLHKRLALRVIQIVGCSPRRLHFGLIMVTMFLSMWISNAACTAMMCPIIQAVLEELQAQGVCKINHEPQYQIVGGNKKNNEDEPPYPTKITLCYYLGIAYASSLGGCGTIIGTATNLTFKGIYEARFKNSTEQMDFPTFMFYSVPSMLVYTLLTFVFLQWHFMGLWRPKSKEAQEVQRGREGADVAKKVIDQRYKDLGPMSIHEIQVMILFIFMVVMYFTRKPGIFLGWADLLNSKDIRNSMPTIFVVVMCFMLPANYAFLRYCTRRGGPVPTGPTPSLITWKFIQTKVPWGLVFLLGGGFALAEGSKQSGMAKLIGNALIGLKVLPNSVLLLVVILVAVFLTAFSSNVAIANIIIPVLAEMSLAIEIHPLYLILPAGLACSMAFHLPVSTPPNALVAGYANIRTKDMAIAGIGPTIITIITLFVFCQTWGLVVYPNLNSFPEWAQIYAAAALGNKTH</sequence>
<evidence type="ECO:0000255" key="1"/>
<evidence type="ECO:0000269" key="2">
    <source>
    </source>
</evidence>
<evidence type="ECO:0000269" key="3">
    <source>
    </source>
</evidence>
<evidence type="ECO:0000269" key="4">
    <source>
    </source>
</evidence>
<evidence type="ECO:0000269" key="5">
    <source>
    </source>
</evidence>
<evidence type="ECO:0000269" key="6">
    <source>
    </source>
</evidence>
<evidence type="ECO:0000305" key="7"/>
<evidence type="ECO:0000312" key="8">
    <source>
        <dbReference type="EMBL" id="AAF73384.1"/>
    </source>
</evidence>
<evidence type="ECO:0000312" key="9">
    <source>
        <dbReference type="EMBL" id="AAM27515.1"/>
    </source>
</evidence>
<proteinExistence type="evidence at protein level"/>
<dbReference type="EMBL" id="AF509505">
    <property type="protein sequence ID" value="AAN86815.1"/>
    <property type="molecule type" value="mRNA"/>
</dbReference>
<dbReference type="EMBL" id="AE014296">
    <property type="protein sequence ID" value="AAF49226.1"/>
    <property type="molecule type" value="Genomic_DNA"/>
</dbReference>
<dbReference type="EMBL" id="AE014296">
    <property type="protein sequence ID" value="AAF49227.2"/>
    <property type="molecule type" value="Genomic_DNA"/>
</dbReference>
<dbReference type="EMBL" id="AE014296">
    <property type="protein sequence ID" value="AAN11670.1"/>
    <property type="molecule type" value="Genomic_DNA"/>
</dbReference>
<dbReference type="EMBL" id="AY102686">
    <property type="protein sequence ID" value="AAM27515.1"/>
    <property type="molecule type" value="mRNA"/>
</dbReference>
<dbReference type="EMBL" id="AF217399">
    <property type="protein sequence ID" value="AAF73384.1"/>
    <property type="status" value="ALT_INIT"/>
    <property type="molecule type" value="mRNA"/>
</dbReference>
<dbReference type="RefSeq" id="NP_001163465.1">
    <molecule id="Q9VVT2-2"/>
    <property type="nucleotide sequence ID" value="NM_001169994.2"/>
</dbReference>
<dbReference type="RefSeq" id="NP_524150.1">
    <molecule id="Q9VVT2-2"/>
    <property type="nucleotide sequence ID" value="NM_079426.4"/>
</dbReference>
<dbReference type="RefSeq" id="NP_730363.2">
    <molecule id="Q9VVT2-1"/>
    <property type="nucleotide sequence ID" value="NM_168778.2"/>
</dbReference>
<dbReference type="RefSeq" id="NP_730364.1">
    <molecule id="Q9VVT2-2"/>
    <property type="nucleotide sequence ID" value="NM_168779.2"/>
</dbReference>
<dbReference type="PDB" id="8ZKW">
    <property type="method" value="EM"/>
    <property type="resolution" value="2.77 A"/>
    <property type="chains" value="A/B=1-590"/>
</dbReference>
<dbReference type="PDB" id="8ZKZ">
    <property type="method" value="EM"/>
    <property type="resolution" value="2.70 A"/>
    <property type="chains" value="A/B=1-590"/>
</dbReference>
<dbReference type="PDB" id="8ZL1">
    <property type="method" value="EM"/>
    <property type="resolution" value="2.86 A"/>
    <property type="chains" value="A/B=1-590"/>
</dbReference>
<dbReference type="PDB" id="8ZL2">
    <property type="method" value="EM"/>
    <property type="resolution" value="2.80 A"/>
    <property type="chains" value="A/B=1-590"/>
</dbReference>
<dbReference type="PDB" id="8ZL3">
    <property type="method" value="EM"/>
    <property type="resolution" value="2.90 A"/>
    <property type="chains" value="A/B=1-590"/>
</dbReference>
<dbReference type="PDB" id="8ZL4">
    <property type="method" value="EM"/>
    <property type="resolution" value="3.65 A"/>
    <property type="chains" value="A/B=1-590"/>
</dbReference>
<dbReference type="PDB" id="8ZL6">
    <property type="method" value="EM"/>
    <property type="resolution" value="2.80 A"/>
    <property type="chains" value="A/B=1-590"/>
</dbReference>
<dbReference type="PDBsum" id="8ZKW"/>
<dbReference type="PDBsum" id="8ZKZ"/>
<dbReference type="PDBsum" id="8ZL1"/>
<dbReference type="PDBsum" id="8ZL2"/>
<dbReference type="PDBsum" id="8ZL3"/>
<dbReference type="PDBsum" id="8ZL4"/>
<dbReference type="PDBsum" id="8ZL6"/>
<dbReference type="EMDB" id="EMD-60210"/>
<dbReference type="EMDB" id="EMD-60213"/>
<dbReference type="EMDB" id="EMD-60215"/>
<dbReference type="EMDB" id="EMD-60216"/>
<dbReference type="EMDB" id="EMD-60217"/>
<dbReference type="EMDB" id="EMD-60218"/>
<dbReference type="EMDB" id="EMD-60220"/>
<dbReference type="SMR" id="Q9VVT2"/>
<dbReference type="BioGRID" id="65330">
    <property type="interactions" value="5"/>
</dbReference>
<dbReference type="DIP" id="DIP-18443N"/>
<dbReference type="FunCoup" id="Q9VVT2">
    <property type="interactions" value="210"/>
</dbReference>
<dbReference type="IntAct" id="Q9VVT2">
    <property type="interactions" value="3"/>
</dbReference>
<dbReference type="STRING" id="7227.FBpp0074848"/>
<dbReference type="TCDB" id="2.A.47.1.10">
    <property type="family name" value="the divalent anion:na(+) symporter (dass) family"/>
</dbReference>
<dbReference type="GlyGen" id="Q9VVT2">
    <property type="glycosylation" value="2 sites"/>
</dbReference>
<dbReference type="SwissPalm" id="Q9VVT2"/>
<dbReference type="PaxDb" id="7227-FBpp0074848"/>
<dbReference type="DNASU" id="40049"/>
<dbReference type="EnsemblMetazoa" id="FBtr0075081">
    <molecule id="Q9VVT2-1"/>
    <property type="protein sequence ID" value="FBpp0074848"/>
    <property type="gene ID" value="FBgn0036816"/>
</dbReference>
<dbReference type="EnsemblMetazoa" id="FBtr0075082">
    <molecule id="Q9VVT2-2"/>
    <property type="protein sequence ID" value="FBpp0074849"/>
    <property type="gene ID" value="FBgn0036816"/>
</dbReference>
<dbReference type="EnsemblMetazoa" id="FBtr0075083">
    <molecule id="Q9VVT2-2"/>
    <property type="protein sequence ID" value="FBpp0074850"/>
    <property type="gene ID" value="FBgn0036816"/>
</dbReference>
<dbReference type="EnsemblMetazoa" id="FBtr0301857">
    <molecule id="Q9VVT2-2"/>
    <property type="protein sequence ID" value="FBpp0291071"/>
    <property type="gene ID" value="FBgn0036816"/>
</dbReference>
<dbReference type="GeneID" id="40049"/>
<dbReference type="KEGG" id="dme:Dmel_CG3979"/>
<dbReference type="AGR" id="FB:FBgn0036816"/>
<dbReference type="CTD" id="40049"/>
<dbReference type="FlyBase" id="FBgn0036816">
    <property type="gene designation" value="Indy"/>
</dbReference>
<dbReference type="VEuPathDB" id="VectorBase:FBgn0036816"/>
<dbReference type="eggNOG" id="KOG1281">
    <property type="taxonomic scope" value="Eukaryota"/>
</dbReference>
<dbReference type="GeneTree" id="ENSGT01030000234550"/>
<dbReference type="InParanoid" id="Q9VVT2"/>
<dbReference type="OMA" id="ILLWMTT"/>
<dbReference type="OrthoDB" id="6493944at2759"/>
<dbReference type="PhylomeDB" id="Q9VVT2"/>
<dbReference type="Reactome" id="R-DME-433137">
    <property type="pathway name" value="Sodium-coupled sulphate, di- and tri-carboxylate transporters"/>
</dbReference>
<dbReference type="SignaLink" id="Q9VVT2"/>
<dbReference type="BioGRID-ORCS" id="40049">
    <property type="hits" value="0 hits in 3 CRISPR screens"/>
</dbReference>
<dbReference type="ChiTaRS" id="Indy">
    <property type="organism name" value="fly"/>
</dbReference>
<dbReference type="GenomeRNAi" id="40049"/>
<dbReference type="PRO" id="PR:Q9VVT2"/>
<dbReference type="Proteomes" id="UP000000803">
    <property type="component" value="Chromosome 3L"/>
</dbReference>
<dbReference type="Bgee" id="FBgn0036816">
    <property type="expression patterns" value="Expressed in crop (Drosophila) and 173 other cell types or tissues"/>
</dbReference>
<dbReference type="ExpressionAtlas" id="Q9VVT2">
    <property type="expression patterns" value="baseline and differential"/>
</dbReference>
<dbReference type="GO" id="GO:0016323">
    <property type="term" value="C:basolateral plasma membrane"/>
    <property type="evidence" value="ECO:0007669"/>
    <property type="project" value="UniProtKB-SubCell"/>
</dbReference>
<dbReference type="GO" id="GO:0005886">
    <property type="term" value="C:plasma membrane"/>
    <property type="evidence" value="ECO:0000314"/>
    <property type="project" value="UniProtKB"/>
</dbReference>
<dbReference type="GO" id="GO:0015137">
    <property type="term" value="F:citrate transmembrane transporter activity"/>
    <property type="evidence" value="ECO:0000314"/>
    <property type="project" value="UniProtKB"/>
</dbReference>
<dbReference type="GO" id="GO:0050833">
    <property type="term" value="F:pyruvate transmembrane transporter activity"/>
    <property type="evidence" value="ECO:0000314"/>
    <property type="project" value="UniProtKB"/>
</dbReference>
<dbReference type="GO" id="GO:0015141">
    <property type="term" value="F:succinate transmembrane transporter activity"/>
    <property type="evidence" value="ECO:0000314"/>
    <property type="project" value="UniProtKB"/>
</dbReference>
<dbReference type="GO" id="GO:0015746">
    <property type="term" value="P:citrate transport"/>
    <property type="evidence" value="ECO:0000314"/>
    <property type="project" value="UniProtKB"/>
</dbReference>
<dbReference type="GO" id="GO:0008340">
    <property type="term" value="P:determination of adult lifespan"/>
    <property type="evidence" value="ECO:0000314"/>
    <property type="project" value="FlyBase"/>
</dbReference>
<dbReference type="GO" id="GO:0006848">
    <property type="term" value="P:pyruvate transport"/>
    <property type="evidence" value="ECO:0000314"/>
    <property type="project" value="UniProtKB"/>
</dbReference>
<dbReference type="GO" id="GO:0010889">
    <property type="term" value="P:regulation of triglyceride storage"/>
    <property type="evidence" value="ECO:0000314"/>
    <property type="project" value="FlyBase"/>
</dbReference>
<dbReference type="GO" id="GO:0015744">
    <property type="term" value="P:succinate transport"/>
    <property type="evidence" value="ECO:0000314"/>
    <property type="project" value="UniProtKB"/>
</dbReference>
<dbReference type="GO" id="GO:0055085">
    <property type="term" value="P:transmembrane transport"/>
    <property type="evidence" value="ECO:0000318"/>
    <property type="project" value="GO_Central"/>
</dbReference>
<dbReference type="InterPro" id="IPR031312">
    <property type="entry name" value="Na/sul_symport_CS"/>
</dbReference>
<dbReference type="InterPro" id="IPR001898">
    <property type="entry name" value="SLC13A/DASS"/>
</dbReference>
<dbReference type="PANTHER" id="PTHR10283">
    <property type="entry name" value="SOLUTE CARRIER FAMILY 13 MEMBER"/>
    <property type="match status" value="1"/>
</dbReference>
<dbReference type="PANTHER" id="PTHR10283:SF82">
    <property type="entry name" value="SOLUTE CARRIER FAMILY 13 MEMBER 2"/>
    <property type="match status" value="1"/>
</dbReference>
<dbReference type="Pfam" id="PF00939">
    <property type="entry name" value="Na_sulph_symp"/>
    <property type="match status" value="1"/>
</dbReference>
<dbReference type="PROSITE" id="PS01271">
    <property type="entry name" value="NA_SULFATE"/>
    <property type="match status" value="1"/>
</dbReference>
<protein>
    <recommendedName>
        <fullName>Protein I'm not dead yet</fullName>
    </recommendedName>
    <alternativeName>
        <fullName>INDY transporter protein</fullName>
    </alternativeName>
    <alternativeName>
        <fullName>drIndy</fullName>
    </alternativeName>
</protein>
<accession>Q9VVT2</accession>
<accession>A4V236</accession>
<accession>Q7KUS6</accession>
<accession>Q9NHY9</accession>
<organism evidence="9">
    <name type="scientific">Drosophila melanogaster</name>
    <name type="common">Fruit fly</name>
    <dbReference type="NCBI Taxonomy" id="7227"/>
    <lineage>
        <taxon>Eukaryota</taxon>
        <taxon>Metazoa</taxon>
        <taxon>Ecdysozoa</taxon>
        <taxon>Arthropoda</taxon>
        <taxon>Hexapoda</taxon>
        <taxon>Insecta</taxon>
        <taxon>Pterygota</taxon>
        <taxon>Neoptera</taxon>
        <taxon>Endopterygota</taxon>
        <taxon>Diptera</taxon>
        <taxon>Brachycera</taxon>
        <taxon>Muscomorpha</taxon>
        <taxon>Ephydroidea</taxon>
        <taxon>Drosophilidae</taxon>
        <taxon>Drosophila</taxon>
        <taxon>Sophophora</taxon>
    </lineage>
</organism>
<gene>
    <name type="primary">Indy</name>
    <name type="ORF">CG3979</name>
</gene>
<name>INDY1_DROME</name>